<keyword id="KW-0143">Chaperone</keyword>
<keyword id="KW-0963">Cytoplasm</keyword>
<keyword id="KW-0690">Ribosome biogenesis</keyword>
<keyword id="KW-0698">rRNA processing</keyword>
<organism>
    <name type="scientific">Staphylococcus aureus (strain Mu3 / ATCC 700698)</name>
    <dbReference type="NCBI Taxonomy" id="418127"/>
    <lineage>
        <taxon>Bacteria</taxon>
        <taxon>Bacillati</taxon>
        <taxon>Bacillota</taxon>
        <taxon>Bacilli</taxon>
        <taxon>Bacillales</taxon>
        <taxon>Staphylococcaceae</taxon>
        <taxon>Staphylococcus</taxon>
    </lineage>
</organism>
<reference key="1">
    <citation type="journal article" date="2008" name="Antimicrob. Agents Chemother.">
        <title>Mutated response regulator graR is responsible for phenotypic conversion of Staphylococcus aureus from heterogeneous vancomycin-intermediate resistance to vancomycin-intermediate resistance.</title>
        <authorList>
            <person name="Neoh H.-M."/>
            <person name="Cui L."/>
            <person name="Yuzawa H."/>
            <person name="Takeuchi F."/>
            <person name="Matsuo M."/>
            <person name="Hiramatsu K."/>
        </authorList>
    </citation>
    <scope>NUCLEOTIDE SEQUENCE [LARGE SCALE GENOMIC DNA]</scope>
    <source>
        <strain>Mu3 / ATCC 700698</strain>
    </source>
</reference>
<accession>A7X1K9</accession>
<proteinExistence type="inferred from homology"/>
<comment type="function">
    <text evidence="1">An accessory protein needed during the final step in the assembly of 30S ribosomal subunit, possibly for assembly of the head region. Essential for efficient processing of 16S rRNA. May be needed both before and after RbfA during the maturation of 16S rRNA. It has affinity for free ribosomal 30S subunits but not for 70S ribosomes.</text>
</comment>
<comment type="subunit">
    <text evidence="1">Binds ribosomal protein uS19.</text>
</comment>
<comment type="subcellular location">
    <subcellularLocation>
        <location evidence="1">Cytoplasm</location>
    </subcellularLocation>
</comment>
<comment type="domain">
    <text evidence="1">The PRC barrel domain binds ribosomal protein uS19.</text>
</comment>
<comment type="similarity">
    <text evidence="1">Belongs to the RimM family.</text>
</comment>
<sequence length="167" mass="19073">MRVEVGQIVNTHGIKGEIKVKSNSDFTDVRFQPGQVLTVVHNNNDLEYTVKSHRVHKGLHMLTFEGINNINDIEHLKGSSIYQERDHEDIVLEENEFYYSDIIGCTVFDDQETPIGRVINIFETGANDVWVIKGSKEYLIPYIADVVKEVDVENKKIIITPMEGLLD</sequence>
<evidence type="ECO:0000255" key="1">
    <source>
        <dbReference type="HAMAP-Rule" id="MF_00014"/>
    </source>
</evidence>
<dbReference type="EMBL" id="AP009324">
    <property type="protein sequence ID" value="BAF78112.1"/>
    <property type="molecule type" value="Genomic_DNA"/>
</dbReference>
<dbReference type="RefSeq" id="WP_001261987.1">
    <property type="nucleotide sequence ID" value="NZ_CTYB01000004.1"/>
</dbReference>
<dbReference type="SMR" id="A7X1K9"/>
<dbReference type="KEGG" id="saw:SAHV_1229"/>
<dbReference type="HOGENOM" id="CLU_077636_3_1_9"/>
<dbReference type="GO" id="GO:0005737">
    <property type="term" value="C:cytoplasm"/>
    <property type="evidence" value="ECO:0007669"/>
    <property type="project" value="UniProtKB-SubCell"/>
</dbReference>
<dbReference type="GO" id="GO:0005840">
    <property type="term" value="C:ribosome"/>
    <property type="evidence" value="ECO:0007669"/>
    <property type="project" value="InterPro"/>
</dbReference>
<dbReference type="GO" id="GO:0043022">
    <property type="term" value="F:ribosome binding"/>
    <property type="evidence" value="ECO:0007669"/>
    <property type="project" value="InterPro"/>
</dbReference>
<dbReference type="GO" id="GO:0042274">
    <property type="term" value="P:ribosomal small subunit biogenesis"/>
    <property type="evidence" value="ECO:0007669"/>
    <property type="project" value="UniProtKB-UniRule"/>
</dbReference>
<dbReference type="GO" id="GO:0006364">
    <property type="term" value="P:rRNA processing"/>
    <property type="evidence" value="ECO:0007669"/>
    <property type="project" value="UniProtKB-UniRule"/>
</dbReference>
<dbReference type="Gene3D" id="2.30.30.240">
    <property type="entry name" value="PRC-barrel domain"/>
    <property type="match status" value="1"/>
</dbReference>
<dbReference type="Gene3D" id="2.40.30.60">
    <property type="entry name" value="RimM"/>
    <property type="match status" value="1"/>
</dbReference>
<dbReference type="HAMAP" id="MF_00014">
    <property type="entry name" value="Ribosome_mat_RimM"/>
    <property type="match status" value="1"/>
</dbReference>
<dbReference type="InterPro" id="IPR011033">
    <property type="entry name" value="PRC_barrel-like_sf"/>
</dbReference>
<dbReference type="InterPro" id="IPR056792">
    <property type="entry name" value="PRC_RimM"/>
</dbReference>
<dbReference type="InterPro" id="IPR011961">
    <property type="entry name" value="RimM"/>
</dbReference>
<dbReference type="InterPro" id="IPR002676">
    <property type="entry name" value="RimM_N"/>
</dbReference>
<dbReference type="InterPro" id="IPR036976">
    <property type="entry name" value="RimM_N_sf"/>
</dbReference>
<dbReference type="InterPro" id="IPR009000">
    <property type="entry name" value="Transl_B-barrel_sf"/>
</dbReference>
<dbReference type="NCBIfam" id="TIGR02273">
    <property type="entry name" value="16S_RimM"/>
    <property type="match status" value="1"/>
</dbReference>
<dbReference type="PANTHER" id="PTHR33692">
    <property type="entry name" value="RIBOSOME MATURATION FACTOR RIMM"/>
    <property type="match status" value="1"/>
</dbReference>
<dbReference type="PANTHER" id="PTHR33692:SF1">
    <property type="entry name" value="RIBOSOME MATURATION FACTOR RIMM"/>
    <property type="match status" value="1"/>
</dbReference>
<dbReference type="Pfam" id="PF24986">
    <property type="entry name" value="PRC_RimM"/>
    <property type="match status" value="1"/>
</dbReference>
<dbReference type="Pfam" id="PF01782">
    <property type="entry name" value="RimM"/>
    <property type="match status" value="1"/>
</dbReference>
<dbReference type="SUPFAM" id="SSF50346">
    <property type="entry name" value="PRC-barrel domain"/>
    <property type="match status" value="1"/>
</dbReference>
<dbReference type="SUPFAM" id="SSF50447">
    <property type="entry name" value="Translation proteins"/>
    <property type="match status" value="1"/>
</dbReference>
<gene>
    <name evidence="1" type="primary">rimM</name>
    <name type="ordered locus">SAHV_1229</name>
</gene>
<feature type="chain" id="PRO_1000001232" description="Ribosome maturation factor RimM">
    <location>
        <begin position="1"/>
        <end position="167"/>
    </location>
</feature>
<feature type="domain" description="PRC barrel" evidence="1">
    <location>
        <begin position="94"/>
        <end position="165"/>
    </location>
</feature>
<name>RIMM_STAA1</name>
<protein>
    <recommendedName>
        <fullName evidence="1">Ribosome maturation factor RimM</fullName>
    </recommendedName>
</protein>